<sequence length="332" mass="36799">MKTLGEFIVEKQHEFSQATGELTALLSAIKLGAKIIHRDINKAGLVDILGASGAENVQGEVQQKLDLFANEKLKAALKARDIVAGIASEEEDEIVVFEGCEHAKYVVLMDPLDGSSNIDVNVSVGTIFSIYRRVTPVGTPVTEEDFLQPGNKQVAAGYVVYGSSTMLVYTTGCGVHAFTYDPSLGVFCLCQERMRFPEKGKTYSINEGNYIKFPNGVKKYIKFCQEEDSSTSRPYTSRYIGSLVADFHRNLLKGGIYLYPSTASHPQGKLRLLYECNPMAFLAEQAGGKASDGKERILDIIPESLHQRRSFFVGNRHMVDDVERFIREYPDA</sequence>
<reference key="1">
    <citation type="journal article" date="2011" name="J. Bacteriol.">
        <title>Comparative genomics of 28 Salmonella enterica isolates: evidence for CRISPR-mediated adaptive sublineage evolution.</title>
        <authorList>
            <person name="Fricke W.F."/>
            <person name="Mammel M.K."/>
            <person name="McDermott P.F."/>
            <person name="Tartera C."/>
            <person name="White D.G."/>
            <person name="Leclerc J.E."/>
            <person name="Ravel J."/>
            <person name="Cebula T.A."/>
        </authorList>
    </citation>
    <scope>NUCLEOTIDE SEQUENCE [LARGE SCALE GENOMIC DNA]</scope>
    <source>
        <strain>SL254</strain>
    </source>
</reference>
<gene>
    <name evidence="1" type="primary">fbp</name>
    <name type="ordered locus">SNSL254_A4780</name>
</gene>
<evidence type="ECO:0000255" key="1">
    <source>
        <dbReference type="HAMAP-Rule" id="MF_01855"/>
    </source>
</evidence>
<protein>
    <recommendedName>
        <fullName evidence="1">Fructose-1,6-bisphosphatase class 1</fullName>
        <shortName evidence="1">FBPase class 1</shortName>
        <ecNumber evidence="1">3.1.3.11</ecNumber>
    </recommendedName>
    <alternativeName>
        <fullName evidence="1">D-fructose-1,6-bisphosphate 1-phosphohydrolase class 1</fullName>
    </alternativeName>
</protein>
<feature type="chain" id="PRO_0000364691" description="Fructose-1,6-bisphosphatase class 1">
    <location>
        <begin position="1"/>
        <end position="332"/>
    </location>
</feature>
<feature type="binding site" evidence="1">
    <location>
        <position position="89"/>
    </location>
    <ligand>
        <name>Mg(2+)</name>
        <dbReference type="ChEBI" id="CHEBI:18420"/>
        <label>1</label>
    </ligand>
</feature>
<feature type="binding site" evidence="1">
    <location>
        <position position="110"/>
    </location>
    <ligand>
        <name>Mg(2+)</name>
        <dbReference type="ChEBI" id="CHEBI:18420"/>
        <label>1</label>
    </ligand>
</feature>
<feature type="binding site" evidence="1">
    <location>
        <position position="110"/>
    </location>
    <ligand>
        <name>Mg(2+)</name>
        <dbReference type="ChEBI" id="CHEBI:18420"/>
        <label>2</label>
    </ligand>
</feature>
<feature type="binding site" evidence="1">
    <location>
        <position position="112"/>
    </location>
    <ligand>
        <name>Mg(2+)</name>
        <dbReference type="ChEBI" id="CHEBI:18420"/>
        <label>1</label>
    </ligand>
</feature>
<feature type="binding site" evidence="1">
    <location>
        <begin position="113"/>
        <end position="116"/>
    </location>
    <ligand>
        <name>substrate</name>
    </ligand>
</feature>
<feature type="binding site" evidence="1">
    <location>
        <position position="113"/>
    </location>
    <ligand>
        <name>Mg(2+)</name>
        <dbReference type="ChEBI" id="CHEBI:18420"/>
        <label>2</label>
    </ligand>
</feature>
<feature type="binding site" evidence="1">
    <location>
        <position position="206"/>
    </location>
    <ligand>
        <name>substrate</name>
    </ligand>
</feature>
<feature type="binding site" evidence="1">
    <location>
        <position position="239"/>
    </location>
    <ligand>
        <name>substrate</name>
    </ligand>
</feature>
<feature type="binding site" evidence="1">
    <location>
        <begin position="257"/>
        <end position="259"/>
    </location>
    <ligand>
        <name>substrate</name>
    </ligand>
</feature>
<feature type="binding site" evidence="1">
    <location>
        <position position="269"/>
    </location>
    <ligand>
        <name>substrate</name>
    </ligand>
</feature>
<feature type="binding site" evidence="1">
    <location>
        <position position="275"/>
    </location>
    <ligand>
        <name>Mg(2+)</name>
        <dbReference type="ChEBI" id="CHEBI:18420"/>
        <label>2</label>
    </ligand>
</feature>
<comment type="catalytic activity">
    <reaction evidence="1">
        <text>beta-D-fructose 1,6-bisphosphate + H2O = beta-D-fructose 6-phosphate + phosphate</text>
        <dbReference type="Rhea" id="RHEA:11064"/>
        <dbReference type="ChEBI" id="CHEBI:15377"/>
        <dbReference type="ChEBI" id="CHEBI:32966"/>
        <dbReference type="ChEBI" id="CHEBI:43474"/>
        <dbReference type="ChEBI" id="CHEBI:57634"/>
        <dbReference type="EC" id="3.1.3.11"/>
    </reaction>
</comment>
<comment type="cofactor">
    <cofactor evidence="1">
        <name>Mg(2+)</name>
        <dbReference type="ChEBI" id="CHEBI:18420"/>
    </cofactor>
    <text evidence="1">Binds 2 magnesium ions per subunit.</text>
</comment>
<comment type="pathway">
    <text evidence="1">Carbohydrate biosynthesis; gluconeogenesis.</text>
</comment>
<comment type="subunit">
    <text evidence="1">Homotetramer.</text>
</comment>
<comment type="subcellular location">
    <subcellularLocation>
        <location evidence="1">Cytoplasm</location>
    </subcellularLocation>
</comment>
<comment type="similarity">
    <text evidence="1">Belongs to the FBPase class 1 family.</text>
</comment>
<name>F16PA_SALNS</name>
<proteinExistence type="inferred from homology"/>
<organism>
    <name type="scientific">Salmonella newport (strain SL254)</name>
    <dbReference type="NCBI Taxonomy" id="423368"/>
    <lineage>
        <taxon>Bacteria</taxon>
        <taxon>Pseudomonadati</taxon>
        <taxon>Pseudomonadota</taxon>
        <taxon>Gammaproteobacteria</taxon>
        <taxon>Enterobacterales</taxon>
        <taxon>Enterobacteriaceae</taxon>
        <taxon>Salmonella</taxon>
    </lineage>
</organism>
<keyword id="KW-0119">Carbohydrate metabolism</keyword>
<keyword id="KW-0963">Cytoplasm</keyword>
<keyword id="KW-0378">Hydrolase</keyword>
<keyword id="KW-0460">Magnesium</keyword>
<keyword id="KW-0479">Metal-binding</keyword>
<accession>B4T3H9</accession>
<dbReference type="EC" id="3.1.3.11" evidence="1"/>
<dbReference type="EMBL" id="CP001113">
    <property type="protein sequence ID" value="ACF64923.1"/>
    <property type="molecule type" value="Genomic_DNA"/>
</dbReference>
<dbReference type="RefSeq" id="WP_000853764.1">
    <property type="nucleotide sequence ID" value="NZ_CCMR01000003.1"/>
</dbReference>
<dbReference type="SMR" id="B4T3H9"/>
<dbReference type="KEGG" id="see:SNSL254_A4780"/>
<dbReference type="HOGENOM" id="CLU_039977_2_2_6"/>
<dbReference type="UniPathway" id="UPA00138"/>
<dbReference type="Proteomes" id="UP000008824">
    <property type="component" value="Chromosome"/>
</dbReference>
<dbReference type="GO" id="GO:0005829">
    <property type="term" value="C:cytosol"/>
    <property type="evidence" value="ECO:0007669"/>
    <property type="project" value="TreeGrafter"/>
</dbReference>
<dbReference type="GO" id="GO:0042132">
    <property type="term" value="F:fructose 1,6-bisphosphate 1-phosphatase activity"/>
    <property type="evidence" value="ECO:0007669"/>
    <property type="project" value="UniProtKB-UniRule"/>
</dbReference>
<dbReference type="GO" id="GO:0000287">
    <property type="term" value="F:magnesium ion binding"/>
    <property type="evidence" value="ECO:0007669"/>
    <property type="project" value="UniProtKB-UniRule"/>
</dbReference>
<dbReference type="GO" id="GO:0030388">
    <property type="term" value="P:fructose 1,6-bisphosphate metabolic process"/>
    <property type="evidence" value="ECO:0007669"/>
    <property type="project" value="TreeGrafter"/>
</dbReference>
<dbReference type="GO" id="GO:0006002">
    <property type="term" value="P:fructose 6-phosphate metabolic process"/>
    <property type="evidence" value="ECO:0007669"/>
    <property type="project" value="TreeGrafter"/>
</dbReference>
<dbReference type="GO" id="GO:0006000">
    <property type="term" value="P:fructose metabolic process"/>
    <property type="evidence" value="ECO:0007669"/>
    <property type="project" value="TreeGrafter"/>
</dbReference>
<dbReference type="GO" id="GO:0006094">
    <property type="term" value="P:gluconeogenesis"/>
    <property type="evidence" value="ECO:0007669"/>
    <property type="project" value="UniProtKB-UniRule"/>
</dbReference>
<dbReference type="GO" id="GO:0005986">
    <property type="term" value="P:sucrose biosynthetic process"/>
    <property type="evidence" value="ECO:0007669"/>
    <property type="project" value="TreeGrafter"/>
</dbReference>
<dbReference type="CDD" id="cd00354">
    <property type="entry name" value="FBPase"/>
    <property type="match status" value="1"/>
</dbReference>
<dbReference type="FunFam" id="3.30.540.10:FF:000002">
    <property type="entry name" value="Fructose-1,6-bisphosphatase class 1"/>
    <property type="match status" value="1"/>
</dbReference>
<dbReference type="FunFam" id="3.40.190.80:FF:000001">
    <property type="entry name" value="Fructose-1,6-bisphosphatase class 1"/>
    <property type="match status" value="1"/>
</dbReference>
<dbReference type="Gene3D" id="3.40.190.80">
    <property type="match status" value="1"/>
</dbReference>
<dbReference type="Gene3D" id="3.30.540.10">
    <property type="entry name" value="Fructose-1,6-Bisphosphatase, subunit A, domain 1"/>
    <property type="match status" value="1"/>
</dbReference>
<dbReference type="HAMAP" id="MF_01855">
    <property type="entry name" value="FBPase_class1"/>
    <property type="match status" value="1"/>
</dbReference>
<dbReference type="InterPro" id="IPR044015">
    <property type="entry name" value="FBPase_C_dom"/>
</dbReference>
<dbReference type="InterPro" id="IPR000146">
    <property type="entry name" value="FBPase_class-1"/>
</dbReference>
<dbReference type="InterPro" id="IPR033391">
    <property type="entry name" value="FBPase_N"/>
</dbReference>
<dbReference type="InterPro" id="IPR028343">
    <property type="entry name" value="FBPtase"/>
</dbReference>
<dbReference type="InterPro" id="IPR020548">
    <property type="entry name" value="Fructose_bisphosphatase_AS"/>
</dbReference>
<dbReference type="NCBIfam" id="NF006778">
    <property type="entry name" value="PRK09293.1-1"/>
    <property type="match status" value="1"/>
</dbReference>
<dbReference type="NCBIfam" id="NF006779">
    <property type="entry name" value="PRK09293.1-3"/>
    <property type="match status" value="1"/>
</dbReference>
<dbReference type="PANTHER" id="PTHR11556">
    <property type="entry name" value="FRUCTOSE-1,6-BISPHOSPHATASE-RELATED"/>
    <property type="match status" value="1"/>
</dbReference>
<dbReference type="PANTHER" id="PTHR11556:SF35">
    <property type="entry name" value="SEDOHEPTULOSE-1,7-BISPHOSPHATASE, CHLOROPLASTIC"/>
    <property type="match status" value="1"/>
</dbReference>
<dbReference type="Pfam" id="PF00316">
    <property type="entry name" value="FBPase"/>
    <property type="match status" value="1"/>
</dbReference>
<dbReference type="Pfam" id="PF18913">
    <property type="entry name" value="FBPase_C"/>
    <property type="match status" value="1"/>
</dbReference>
<dbReference type="PIRSF" id="PIRSF500210">
    <property type="entry name" value="FBPtase"/>
    <property type="match status" value="1"/>
</dbReference>
<dbReference type="PIRSF" id="PIRSF000904">
    <property type="entry name" value="FBPtase_SBPase"/>
    <property type="match status" value="1"/>
</dbReference>
<dbReference type="PRINTS" id="PR00115">
    <property type="entry name" value="F16BPHPHTASE"/>
</dbReference>
<dbReference type="SUPFAM" id="SSF56655">
    <property type="entry name" value="Carbohydrate phosphatase"/>
    <property type="match status" value="1"/>
</dbReference>
<dbReference type="PROSITE" id="PS00124">
    <property type="entry name" value="FBPASE"/>
    <property type="match status" value="1"/>
</dbReference>